<reference key="1">
    <citation type="submission" date="2006-01" db="EMBL/GenBank/DDBJ databases">
        <title>Complete sequence of Rhodopseudomonas palustris HaA2.</title>
        <authorList>
            <consortium name="US DOE Joint Genome Institute"/>
            <person name="Copeland A."/>
            <person name="Lucas S."/>
            <person name="Lapidus A."/>
            <person name="Barry K."/>
            <person name="Detter J.C."/>
            <person name="Glavina T."/>
            <person name="Hammon N."/>
            <person name="Israni S."/>
            <person name="Pitluck S."/>
            <person name="Chain P."/>
            <person name="Malfatti S."/>
            <person name="Shin M."/>
            <person name="Vergez L."/>
            <person name="Schmutz J."/>
            <person name="Larimer F."/>
            <person name="Land M."/>
            <person name="Hauser L."/>
            <person name="Pelletier D.A."/>
            <person name="Kyrpides N."/>
            <person name="Anderson I."/>
            <person name="Oda Y."/>
            <person name="Harwood C.S."/>
            <person name="Richardson P."/>
        </authorList>
    </citation>
    <scope>NUCLEOTIDE SEQUENCE [LARGE SCALE GENOMIC DNA]</scope>
    <source>
        <strain>HaA2</strain>
    </source>
</reference>
<name>3MGH_RHOP2</name>
<organism>
    <name type="scientific">Rhodopseudomonas palustris (strain HaA2)</name>
    <dbReference type="NCBI Taxonomy" id="316058"/>
    <lineage>
        <taxon>Bacteria</taxon>
        <taxon>Pseudomonadati</taxon>
        <taxon>Pseudomonadota</taxon>
        <taxon>Alphaproteobacteria</taxon>
        <taxon>Hyphomicrobiales</taxon>
        <taxon>Nitrobacteraceae</taxon>
        <taxon>Rhodopseudomonas</taxon>
    </lineage>
</organism>
<keyword id="KW-0227">DNA damage</keyword>
<keyword id="KW-0234">DNA repair</keyword>
<keyword id="KW-0378">Hydrolase</keyword>
<keyword id="KW-1185">Reference proteome</keyword>
<evidence type="ECO:0000255" key="1">
    <source>
        <dbReference type="HAMAP-Rule" id="MF_00527"/>
    </source>
</evidence>
<proteinExistence type="inferred from homology"/>
<gene>
    <name type="ordered locus">RPB_2889</name>
</gene>
<accession>Q2IW19</accession>
<dbReference type="EC" id="3.2.2.-" evidence="1"/>
<dbReference type="EMBL" id="CP000250">
    <property type="protein sequence ID" value="ABD07591.1"/>
    <property type="molecule type" value="Genomic_DNA"/>
</dbReference>
<dbReference type="RefSeq" id="WP_011441775.1">
    <property type="nucleotide sequence ID" value="NC_007778.1"/>
</dbReference>
<dbReference type="SMR" id="Q2IW19"/>
<dbReference type="STRING" id="316058.RPB_2889"/>
<dbReference type="KEGG" id="rpb:RPB_2889"/>
<dbReference type="eggNOG" id="COG2094">
    <property type="taxonomic scope" value="Bacteria"/>
</dbReference>
<dbReference type="HOGENOM" id="CLU_060471_4_1_5"/>
<dbReference type="OrthoDB" id="9794313at2"/>
<dbReference type="Proteomes" id="UP000008809">
    <property type="component" value="Chromosome"/>
</dbReference>
<dbReference type="GO" id="GO:0003905">
    <property type="term" value="F:alkylbase DNA N-glycosylase activity"/>
    <property type="evidence" value="ECO:0007669"/>
    <property type="project" value="InterPro"/>
</dbReference>
<dbReference type="GO" id="GO:0003677">
    <property type="term" value="F:DNA binding"/>
    <property type="evidence" value="ECO:0007669"/>
    <property type="project" value="InterPro"/>
</dbReference>
<dbReference type="GO" id="GO:0006284">
    <property type="term" value="P:base-excision repair"/>
    <property type="evidence" value="ECO:0007669"/>
    <property type="project" value="InterPro"/>
</dbReference>
<dbReference type="CDD" id="cd00540">
    <property type="entry name" value="AAG"/>
    <property type="match status" value="1"/>
</dbReference>
<dbReference type="FunFam" id="3.10.300.10:FF:000001">
    <property type="entry name" value="Putative 3-methyladenine DNA glycosylase"/>
    <property type="match status" value="1"/>
</dbReference>
<dbReference type="Gene3D" id="3.10.300.10">
    <property type="entry name" value="Methylpurine-DNA glycosylase (MPG)"/>
    <property type="match status" value="1"/>
</dbReference>
<dbReference type="HAMAP" id="MF_00527">
    <property type="entry name" value="3MGH"/>
    <property type="match status" value="1"/>
</dbReference>
<dbReference type="InterPro" id="IPR011034">
    <property type="entry name" value="Formyl_transferase-like_C_sf"/>
</dbReference>
<dbReference type="InterPro" id="IPR003180">
    <property type="entry name" value="MPG"/>
</dbReference>
<dbReference type="InterPro" id="IPR036995">
    <property type="entry name" value="MPG_sf"/>
</dbReference>
<dbReference type="NCBIfam" id="TIGR00567">
    <property type="entry name" value="3mg"/>
    <property type="match status" value="1"/>
</dbReference>
<dbReference type="NCBIfam" id="NF002003">
    <property type="entry name" value="PRK00802.1-3"/>
    <property type="match status" value="1"/>
</dbReference>
<dbReference type="PANTHER" id="PTHR10429">
    <property type="entry name" value="DNA-3-METHYLADENINE GLYCOSYLASE"/>
    <property type="match status" value="1"/>
</dbReference>
<dbReference type="PANTHER" id="PTHR10429:SF0">
    <property type="entry name" value="DNA-3-METHYLADENINE GLYCOSYLASE"/>
    <property type="match status" value="1"/>
</dbReference>
<dbReference type="Pfam" id="PF02245">
    <property type="entry name" value="Pur_DNA_glyco"/>
    <property type="match status" value="1"/>
</dbReference>
<dbReference type="SUPFAM" id="SSF50486">
    <property type="entry name" value="FMT C-terminal domain-like"/>
    <property type="match status" value="1"/>
</dbReference>
<sequence>MMSSRVSAPAPGALGPPLRRRFFARSVHEVAPELIGATLLVEGVGGVIVEVEAYHHTDPAAHSYGGQTARNAVMFGPPGFAYVYRSYGIHWCVNVVCEAEGSASAVLIRALQPTHGVEAMRARRGLDDARSLCSGPGKLAQALGISIAHNGLPLDAPPFAIHRRIGEPDIVTGPRIGITKAADYPWRFGLKGSRFVSVPFK</sequence>
<comment type="similarity">
    <text evidence="1">Belongs to the DNA glycosylase MPG family.</text>
</comment>
<protein>
    <recommendedName>
        <fullName evidence="1">Putative 3-methyladenine DNA glycosylase</fullName>
        <ecNumber evidence="1">3.2.2.-</ecNumber>
    </recommendedName>
</protein>
<feature type="chain" id="PRO_0000265053" description="Putative 3-methyladenine DNA glycosylase">
    <location>
        <begin position="1"/>
        <end position="201"/>
    </location>
</feature>